<dbReference type="EC" id="5.3.3.2" evidence="1"/>
<dbReference type="EMBL" id="CP000029">
    <property type="protein sequence ID" value="AAW55284.1"/>
    <property type="molecule type" value="Genomic_DNA"/>
</dbReference>
<dbReference type="RefSeq" id="WP_001831537.1">
    <property type="nucleotide sequence ID" value="NC_002976.3"/>
</dbReference>
<dbReference type="SMR" id="Q5HLP8"/>
<dbReference type="STRING" id="176279.SERP1937"/>
<dbReference type="GeneID" id="50017978"/>
<dbReference type="KEGG" id="ser:SERP1937"/>
<dbReference type="eggNOG" id="COG1304">
    <property type="taxonomic scope" value="Bacteria"/>
</dbReference>
<dbReference type="HOGENOM" id="CLU_065515_0_0_9"/>
<dbReference type="Proteomes" id="UP000000531">
    <property type="component" value="Chromosome"/>
</dbReference>
<dbReference type="GO" id="GO:0005737">
    <property type="term" value="C:cytoplasm"/>
    <property type="evidence" value="ECO:0007669"/>
    <property type="project" value="UniProtKB-SubCell"/>
</dbReference>
<dbReference type="GO" id="GO:0010181">
    <property type="term" value="F:FMN binding"/>
    <property type="evidence" value="ECO:0007669"/>
    <property type="project" value="UniProtKB-UniRule"/>
</dbReference>
<dbReference type="GO" id="GO:0004452">
    <property type="term" value="F:isopentenyl-diphosphate delta-isomerase activity"/>
    <property type="evidence" value="ECO:0007669"/>
    <property type="project" value="UniProtKB-UniRule"/>
</dbReference>
<dbReference type="GO" id="GO:0000287">
    <property type="term" value="F:magnesium ion binding"/>
    <property type="evidence" value="ECO:0007669"/>
    <property type="project" value="UniProtKB-UniRule"/>
</dbReference>
<dbReference type="GO" id="GO:0070402">
    <property type="term" value="F:NADPH binding"/>
    <property type="evidence" value="ECO:0007669"/>
    <property type="project" value="UniProtKB-UniRule"/>
</dbReference>
<dbReference type="GO" id="GO:0016491">
    <property type="term" value="F:oxidoreductase activity"/>
    <property type="evidence" value="ECO:0007669"/>
    <property type="project" value="InterPro"/>
</dbReference>
<dbReference type="GO" id="GO:0008299">
    <property type="term" value="P:isoprenoid biosynthetic process"/>
    <property type="evidence" value="ECO:0007669"/>
    <property type="project" value="UniProtKB-UniRule"/>
</dbReference>
<dbReference type="CDD" id="cd02811">
    <property type="entry name" value="IDI-2_FMN"/>
    <property type="match status" value="1"/>
</dbReference>
<dbReference type="Gene3D" id="3.20.20.70">
    <property type="entry name" value="Aldolase class I"/>
    <property type="match status" value="1"/>
</dbReference>
<dbReference type="HAMAP" id="MF_00354">
    <property type="entry name" value="Idi_2"/>
    <property type="match status" value="1"/>
</dbReference>
<dbReference type="InterPro" id="IPR013785">
    <property type="entry name" value="Aldolase_TIM"/>
</dbReference>
<dbReference type="InterPro" id="IPR000262">
    <property type="entry name" value="FMN-dep_DH"/>
</dbReference>
<dbReference type="InterPro" id="IPR011179">
    <property type="entry name" value="IPdP_isomerase"/>
</dbReference>
<dbReference type="NCBIfam" id="TIGR02151">
    <property type="entry name" value="IPP_isom_2"/>
    <property type="match status" value="1"/>
</dbReference>
<dbReference type="PANTHER" id="PTHR43665">
    <property type="entry name" value="ISOPENTENYL-DIPHOSPHATE DELTA-ISOMERASE"/>
    <property type="match status" value="1"/>
</dbReference>
<dbReference type="PANTHER" id="PTHR43665:SF1">
    <property type="entry name" value="ISOPENTENYL-DIPHOSPHATE DELTA-ISOMERASE"/>
    <property type="match status" value="1"/>
</dbReference>
<dbReference type="Pfam" id="PF01070">
    <property type="entry name" value="FMN_dh"/>
    <property type="match status" value="1"/>
</dbReference>
<dbReference type="PIRSF" id="PIRSF003314">
    <property type="entry name" value="IPP_isomerase"/>
    <property type="match status" value="1"/>
</dbReference>
<dbReference type="SUPFAM" id="SSF51395">
    <property type="entry name" value="FMN-linked oxidoreductases"/>
    <property type="match status" value="1"/>
</dbReference>
<feature type="chain" id="PRO_0000134428" description="Isopentenyl-diphosphate delta-isomerase">
    <location>
        <begin position="1"/>
        <end position="349"/>
    </location>
</feature>
<feature type="binding site" evidence="1">
    <location>
        <begin position="9"/>
        <end position="10"/>
    </location>
    <ligand>
        <name>substrate</name>
    </ligand>
</feature>
<feature type="binding site" evidence="1">
    <location>
        <begin position="65"/>
        <end position="67"/>
    </location>
    <ligand>
        <name>FMN</name>
        <dbReference type="ChEBI" id="CHEBI:58210"/>
    </ligand>
</feature>
<feature type="binding site" evidence="1">
    <location>
        <begin position="95"/>
        <end position="97"/>
    </location>
    <ligand>
        <name>substrate</name>
    </ligand>
</feature>
<feature type="binding site" evidence="1">
    <location>
        <position position="95"/>
    </location>
    <ligand>
        <name>FMN</name>
        <dbReference type="ChEBI" id="CHEBI:58210"/>
    </ligand>
</feature>
<feature type="binding site" evidence="1">
    <location>
        <position position="124"/>
    </location>
    <ligand>
        <name>FMN</name>
        <dbReference type="ChEBI" id="CHEBI:58210"/>
    </ligand>
</feature>
<feature type="binding site" evidence="1">
    <location>
        <position position="154"/>
    </location>
    <ligand>
        <name>substrate</name>
    </ligand>
</feature>
<feature type="binding site" evidence="1">
    <location>
        <position position="155"/>
    </location>
    <ligand>
        <name>Mg(2+)</name>
        <dbReference type="ChEBI" id="CHEBI:18420"/>
    </ligand>
</feature>
<feature type="binding site" evidence="1">
    <location>
        <position position="186"/>
    </location>
    <ligand>
        <name>FMN</name>
        <dbReference type="ChEBI" id="CHEBI:58210"/>
    </ligand>
</feature>
<feature type="binding site" evidence="1">
    <location>
        <position position="211"/>
    </location>
    <ligand>
        <name>FMN</name>
        <dbReference type="ChEBI" id="CHEBI:58210"/>
    </ligand>
</feature>
<feature type="binding site" evidence="1">
    <location>
        <position position="216"/>
    </location>
    <ligand>
        <name>FMN</name>
        <dbReference type="ChEBI" id="CHEBI:58210"/>
    </ligand>
</feature>
<feature type="binding site" evidence="1">
    <location>
        <begin position="262"/>
        <end position="264"/>
    </location>
    <ligand>
        <name>FMN</name>
        <dbReference type="ChEBI" id="CHEBI:58210"/>
    </ligand>
</feature>
<feature type="binding site" evidence="1">
    <location>
        <begin position="283"/>
        <end position="284"/>
    </location>
    <ligand>
        <name>FMN</name>
        <dbReference type="ChEBI" id="CHEBI:58210"/>
    </ligand>
</feature>
<name>IDI2_STAEQ</name>
<evidence type="ECO:0000255" key="1">
    <source>
        <dbReference type="HAMAP-Rule" id="MF_00354"/>
    </source>
</evidence>
<gene>
    <name evidence="1" type="primary">fni</name>
    <name type="ordered locus">SERP1937</name>
</gene>
<accession>Q5HLP8</accession>
<comment type="function">
    <text evidence="1">Involved in the biosynthesis of isoprenoids. Catalyzes the 1,3-allylic rearrangement of the homoallylic substrate isopentenyl (IPP) to its allylic isomer, dimethylallyl diphosphate (DMAPP).</text>
</comment>
<comment type="catalytic activity">
    <reaction evidence="1">
        <text>isopentenyl diphosphate = dimethylallyl diphosphate</text>
        <dbReference type="Rhea" id="RHEA:23284"/>
        <dbReference type="ChEBI" id="CHEBI:57623"/>
        <dbReference type="ChEBI" id="CHEBI:128769"/>
        <dbReference type="EC" id="5.3.3.2"/>
    </reaction>
</comment>
<comment type="cofactor">
    <cofactor evidence="1">
        <name>FMN</name>
        <dbReference type="ChEBI" id="CHEBI:58210"/>
    </cofactor>
</comment>
<comment type="cofactor">
    <cofactor evidence="1">
        <name>NADPH</name>
        <dbReference type="ChEBI" id="CHEBI:57783"/>
    </cofactor>
</comment>
<comment type="cofactor">
    <cofactor evidence="1">
        <name>Mg(2+)</name>
        <dbReference type="ChEBI" id="CHEBI:18420"/>
    </cofactor>
</comment>
<comment type="subunit">
    <text evidence="1">Homooctamer. Dimer of tetramers.</text>
</comment>
<comment type="subcellular location">
    <subcellularLocation>
        <location evidence="1">Cytoplasm</location>
    </subcellularLocation>
</comment>
<comment type="similarity">
    <text evidence="1">Belongs to the IPP isomerase type 2 family.</text>
</comment>
<organism>
    <name type="scientific">Staphylococcus epidermidis (strain ATCC 35984 / DSM 28319 / BCRC 17069 / CCUG 31568 / BM 3577 / RP62A)</name>
    <dbReference type="NCBI Taxonomy" id="176279"/>
    <lineage>
        <taxon>Bacteria</taxon>
        <taxon>Bacillati</taxon>
        <taxon>Bacillota</taxon>
        <taxon>Bacilli</taxon>
        <taxon>Bacillales</taxon>
        <taxon>Staphylococcaceae</taxon>
        <taxon>Staphylococcus</taxon>
    </lineage>
</organism>
<reference key="1">
    <citation type="journal article" date="2005" name="J. Bacteriol.">
        <title>Insights on evolution of virulence and resistance from the complete genome analysis of an early methicillin-resistant Staphylococcus aureus strain and a biofilm-producing methicillin-resistant Staphylococcus epidermidis strain.</title>
        <authorList>
            <person name="Gill S.R."/>
            <person name="Fouts D.E."/>
            <person name="Archer G.L."/>
            <person name="Mongodin E.F."/>
            <person name="DeBoy R.T."/>
            <person name="Ravel J."/>
            <person name="Paulsen I.T."/>
            <person name="Kolonay J.F."/>
            <person name="Brinkac L.M."/>
            <person name="Beanan M.J."/>
            <person name="Dodson R.J."/>
            <person name="Daugherty S.C."/>
            <person name="Madupu R."/>
            <person name="Angiuoli S.V."/>
            <person name="Durkin A.S."/>
            <person name="Haft D.H."/>
            <person name="Vamathevan J.J."/>
            <person name="Khouri H."/>
            <person name="Utterback T.R."/>
            <person name="Lee C."/>
            <person name="Dimitrov G."/>
            <person name="Jiang L."/>
            <person name="Qin H."/>
            <person name="Weidman J."/>
            <person name="Tran K."/>
            <person name="Kang K.H."/>
            <person name="Hance I.R."/>
            <person name="Nelson K.E."/>
            <person name="Fraser C.M."/>
        </authorList>
    </citation>
    <scope>NUCLEOTIDE SEQUENCE [LARGE SCALE GENOMIC DNA]</scope>
    <source>
        <strain>ATCC 35984 / DSM 28319 / BCRC 17069 / CCUG 31568 / BM 3577 / RP62A</strain>
    </source>
</reference>
<sequence length="349" mass="38970">MSDSQREQRKNEHVEIAMSQKDALVSDFDKVRFVHHSIPSIDVSQVDMTSHTTKFDLAYPIYINAMTGGSDWTKQINEKLAIVARETGIAMAVGSTHAALRNPNMIETFSIVRKTNPKGTIFSNVGADVPVDKALQAVELLDAQALQIHVNSPQELVMPEGNREFASWMSNIESIVKRVDVPVIIKEVGFGMSKETLQALYDIGVNYVDVSGRGGTNFVDIENERRSNKDMNYLSQWGQSTVESLLESTEFQDRLNIFASGGLRTPLDAVKCLALGAKAIGMSRPFLNQVEQSGITNTVDYVESFIQHMKKIMTMLDAPNIERLRQADIVMSPELISWINQRGLHLNRK</sequence>
<keyword id="KW-0963">Cytoplasm</keyword>
<keyword id="KW-0285">Flavoprotein</keyword>
<keyword id="KW-0288">FMN</keyword>
<keyword id="KW-0413">Isomerase</keyword>
<keyword id="KW-0414">Isoprene biosynthesis</keyword>
<keyword id="KW-0460">Magnesium</keyword>
<keyword id="KW-0479">Metal-binding</keyword>
<keyword id="KW-0521">NADP</keyword>
<keyword id="KW-1185">Reference proteome</keyword>
<proteinExistence type="inferred from homology"/>
<protein>
    <recommendedName>
        <fullName evidence="1">Isopentenyl-diphosphate delta-isomerase</fullName>
        <shortName evidence="1">IPP isomerase</shortName>
        <ecNumber evidence="1">5.3.3.2</ecNumber>
    </recommendedName>
    <alternativeName>
        <fullName evidence="1">Isopentenyl diphosphate:dimethylallyl diphosphate isomerase</fullName>
    </alternativeName>
    <alternativeName>
        <fullName evidence="1">Isopentenyl pyrophosphate isomerase</fullName>
    </alternativeName>
    <alternativeName>
        <fullName evidence="1">Type 2 isopentenyl diphosphate isomerase</fullName>
        <shortName evidence="1">IDI-2</shortName>
    </alternativeName>
</protein>